<organism>
    <name type="scientific">Koribacter versatilis (strain Ellin345)</name>
    <dbReference type="NCBI Taxonomy" id="204669"/>
    <lineage>
        <taxon>Bacteria</taxon>
        <taxon>Pseudomonadati</taxon>
        <taxon>Acidobacteriota</taxon>
        <taxon>Terriglobia</taxon>
        <taxon>Terriglobales</taxon>
        <taxon>Candidatus Korobacteraceae</taxon>
        <taxon>Candidatus Korobacter</taxon>
    </lineage>
</organism>
<protein>
    <recommendedName>
        <fullName evidence="1">Cell division protein FtsQ</fullName>
    </recommendedName>
</protein>
<reference key="1">
    <citation type="journal article" date="2009" name="Appl. Environ. Microbiol.">
        <title>Three genomes from the phylum Acidobacteria provide insight into the lifestyles of these microorganisms in soils.</title>
        <authorList>
            <person name="Ward N.L."/>
            <person name="Challacombe J.F."/>
            <person name="Janssen P.H."/>
            <person name="Henrissat B."/>
            <person name="Coutinho P.M."/>
            <person name="Wu M."/>
            <person name="Xie G."/>
            <person name="Haft D.H."/>
            <person name="Sait M."/>
            <person name="Badger J."/>
            <person name="Barabote R.D."/>
            <person name="Bradley B."/>
            <person name="Brettin T.S."/>
            <person name="Brinkac L.M."/>
            <person name="Bruce D."/>
            <person name="Creasy T."/>
            <person name="Daugherty S.C."/>
            <person name="Davidsen T.M."/>
            <person name="DeBoy R.T."/>
            <person name="Detter J.C."/>
            <person name="Dodson R.J."/>
            <person name="Durkin A.S."/>
            <person name="Ganapathy A."/>
            <person name="Gwinn-Giglio M."/>
            <person name="Han C.S."/>
            <person name="Khouri H."/>
            <person name="Kiss H."/>
            <person name="Kothari S.P."/>
            <person name="Madupu R."/>
            <person name="Nelson K.E."/>
            <person name="Nelson W.C."/>
            <person name="Paulsen I."/>
            <person name="Penn K."/>
            <person name="Ren Q."/>
            <person name="Rosovitz M.J."/>
            <person name="Selengut J.D."/>
            <person name="Shrivastava S."/>
            <person name="Sullivan S.A."/>
            <person name="Tapia R."/>
            <person name="Thompson L.S."/>
            <person name="Watkins K.L."/>
            <person name="Yang Q."/>
            <person name="Yu C."/>
            <person name="Zafar N."/>
            <person name="Zhou L."/>
            <person name="Kuske C.R."/>
        </authorList>
    </citation>
    <scope>NUCLEOTIDE SEQUENCE [LARGE SCALE GENOMIC DNA]</scope>
    <source>
        <strain>Ellin345</strain>
    </source>
</reference>
<name>FTSQ_KORVE</name>
<dbReference type="EMBL" id="CP000360">
    <property type="protein sequence ID" value="ABF42454.1"/>
    <property type="molecule type" value="Genomic_DNA"/>
</dbReference>
<dbReference type="RefSeq" id="WP_011524253.1">
    <property type="nucleotide sequence ID" value="NC_008009.1"/>
</dbReference>
<dbReference type="SMR" id="Q1IKZ6"/>
<dbReference type="STRING" id="204669.Acid345_3453"/>
<dbReference type="EnsemblBacteria" id="ABF42454">
    <property type="protein sequence ID" value="ABF42454"/>
    <property type="gene ID" value="Acid345_3453"/>
</dbReference>
<dbReference type="KEGG" id="aba:Acid345_3453"/>
<dbReference type="eggNOG" id="COG1589">
    <property type="taxonomic scope" value="Bacteria"/>
</dbReference>
<dbReference type="HOGENOM" id="CLU_798730_0_0_0"/>
<dbReference type="OrthoDB" id="9783091at2"/>
<dbReference type="Proteomes" id="UP000002432">
    <property type="component" value="Chromosome"/>
</dbReference>
<dbReference type="GO" id="GO:0032153">
    <property type="term" value="C:cell division site"/>
    <property type="evidence" value="ECO:0007669"/>
    <property type="project" value="UniProtKB-UniRule"/>
</dbReference>
<dbReference type="GO" id="GO:0005886">
    <property type="term" value="C:plasma membrane"/>
    <property type="evidence" value="ECO:0007669"/>
    <property type="project" value="UniProtKB-SubCell"/>
</dbReference>
<dbReference type="GO" id="GO:0090529">
    <property type="term" value="P:cell septum assembly"/>
    <property type="evidence" value="ECO:0007669"/>
    <property type="project" value="InterPro"/>
</dbReference>
<dbReference type="GO" id="GO:0043093">
    <property type="term" value="P:FtsZ-dependent cytokinesis"/>
    <property type="evidence" value="ECO:0007669"/>
    <property type="project" value="UniProtKB-UniRule"/>
</dbReference>
<dbReference type="Gene3D" id="3.40.50.11690">
    <property type="entry name" value="Cell division protein FtsQ/DivIB"/>
    <property type="match status" value="1"/>
</dbReference>
<dbReference type="Gene3D" id="3.10.20.310">
    <property type="entry name" value="membrane protein fhac"/>
    <property type="match status" value="1"/>
</dbReference>
<dbReference type="HAMAP" id="MF_00911">
    <property type="entry name" value="FtsQ_subfam"/>
    <property type="match status" value="1"/>
</dbReference>
<dbReference type="InterPro" id="IPR005548">
    <property type="entry name" value="Cell_div_FtsQ/DivIB_C"/>
</dbReference>
<dbReference type="InterPro" id="IPR026579">
    <property type="entry name" value="FtsQ"/>
</dbReference>
<dbReference type="InterPro" id="IPR045335">
    <property type="entry name" value="FtsQ_C_sf"/>
</dbReference>
<dbReference type="InterPro" id="IPR034746">
    <property type="entry name" value="POTRA"/>
</dbReference>
<dbReference type="InterPro" id="IPR013685">
    <property type="entry name" value="POTRA_FtsQ_type"/>
</dbReference>
<dbReference type="PANTHER" id="PTHR35851">
    <property type="entry name" value="CELL DIVISION PROTEIN FTSQ"/>
    <property type="match status" value="1"/>
</dbReference>
<dbReference type="PANTHER" id="PTHR35851:SF1">
    <property type="entry name" value="CELL DIVISION PROTEIN FTSQ"/>
    <property type="match status" value="1"/>
</dbReference>
<dbReference type="Pfam" id="PF03799">
    <property type="entry name" value="FtsQ_DivIB_C"/>
    <property type="match status" value="1"/>
</dbReference>
<dbReference type="Pfam" id="PF08478">
    <property type="entry name" value="POTRA_1"/>
    <property type="match status" value="1"/>
</dbReference>
<dbReference type="PROSITE" id="PS51779">
    <property type="entry name" value="POTRA"/>
    <property type="match status" value="1"/>
</dbReference>
<comment type="function">
    <text evidence="1">Essential cell division protein.</text>
</comment>
<comment type="subcellular location">
    <subcellularLocation>
        <location evidence="1">Cell inner membrane</location>
        <topology evidence="1">Single-pass type II membrane protein</topology>
    </subcellularLocation>
    <text evidence="1">Localizes to the division septum.</text>
</comment>
<comment type="similarity">
    <text evidence="1">Belongs to the FtsQ/DivIB family. FtsQ subfamily.</text>
</comment>
<accession>Q1IKZ6</accession>
<keyword id="KW-0131">Cell cycle</keyword>
<keyword id="KW-0132">Cell division</keyword>
<keyword id="KW-0997">Cell inner membrane</keyword>
<keyword id="KW-1003">Cell membrane</keyword>
<keyword id="KW-0472">Membrane</keyword>
<keyword id="KW-1185">Reference proteome</keyword>
<keyword id="KW-0812">Transmembrane</keyword>
<keyword id="KW-1133">Transmembrane helix</keyword>
<evidence type="ECO:0000255" key="1">
    <source>
        <dbReference type="HAMAP-Rule" id="MF_00911"/>
    </source>
</evidence>
<evidence type="ECO:0000255" key="2">
    <source>
        <dbReference type="PROSITE-ProRule" id="PRU01115"/>
    </source>
</evidence>
<evidence type="ECO:0000256" key="3">
    <source>
        <dbReference type="SAM" id="MobiDB-lite"/>
    </source>
</evidence>
<feature type="chain" id="PRO_0000414675" description="Cell division protein FtsQ">
    <location>
        <begin position="1"/>
        <end position="347"/>
    </location>
</feature>
<feature type="topological domain" description="Cytoplasmic" evidence="1">
    <location>
        <begin position="1"/>
        <end position="66"/>
    </location>
</feature>
<feature type="transmembrane region" description="Helical" evidence="1">
    <location>
        <begin position="67"/>
        <end position="87"/>
    </location>
</feature>
<feature type="topological domain" description="Periplasmic" evidence="1">
    <location>
        <begin position="88"/>
        <end position="347"/>
    </location>
</feature>
<feature type="domain" description="POTRA" evidence="2">
    <location>
        <begin position="98"/>
        <end position="166"/>
    </location>
</feature>
<feature type="region of interest" description="Disordered" evidence="3">
    <location>
        <begin position="1"/>
        <end position="55"/>
    </location>
</feature>
<feature type="region of interest" description="Disordered" evidence="3">
    <location>
        <begin position="308"/>
        <end position="347"/>
    </location>
</feature>
<feature type="compositionally biased region" description="Basic and acidic residues" evidence="3">
    <location>
        <begin position="10"/>
        <end position="33"/>
    </location>
</feature>
<feature type="compositionally biased region" description="Low complexity" evidence="3">
    <location>
        <begin position="313"/>
        <end position="340"/>
    </location>
</feature>
<sequence length="347" mass="38706">MARNGNPQFPDERSTATRAKATEPEELDDRFSDLEPEEDSPFLRSQKRVPVRRGPLPSKKAANRVKIALIVLGVLVVIGGVWMALSAYGEHSWRFRLESSDSIEVGGNEHMSRGEITRVFGGDISRNIFAVPLDERKKQVEELPWVESATVMRILPDRIRVQVTERKPVAFAQIGSRVQLIDAHGVLMEMPFSTTNKYSFPVISGMHENEPLSTRSARMKIYQELVKELDASGEHNSKSLSEVDVSDPDDVKVTVEDADGAVLVHLGSQNFADRFHLYVTHLKEWRSQYQHLDSVDLRYDRQVILNPDSHPSAAKPTAPAVAPAVEKPAVAKPAVAKPTAHTSGRRH</sequence>
<proteinExistence type="inferred from homology"/>
<gene>
    <name evidence="1" type="primary">ftsQ</name>
    <name type="ordered locus">Acid345_3453</name>
</gene>